<reference key="1">
    <citation type="journal article" date="2006" name="Nature">
        <title>The DNA sequence and biological annotation of human chromosome 1.</title>
        <authorList>
            <person name="Gregory S.G."/>
            <person name="Barlow K.F."/>
            <person name="McLay K.E."/>
            <person name="Kaul R."/>
            <person name="Swarbreck D."/>
            <person name="Dunham A."/>
            <person name="Scott C.E."/>
            <person name="Howe K.L."/>
            <person name="Woodfine K."/>
            <person name="Spencer C.C.A."/>
            <person name="Jones M.C."/>
            <person name="Gillson C."/>
            <person name="Searle S."/>
            <person name="Zhou Y."/>
            <person name="Kokocinski F."/>
            <person name="McDonald L."/>
            <person name="Evans R."/>
            <person name="Phillips K."/>
            <person name="Atkinson A."/>
            <person name="Cooper R."/>
            <person name="Jones C."/>
            <person name="Hall R.E."/>
            <person name="Andrews T.D."/>
            <person name="Lloyd C."/>
            <person name="Ainscough R."/>
            <person name="Almeida J.P."/>
            <person name="Ambrose K.D."/>
            <person name="Anderson F."/>
            <person name="Andrew R.W."/>
            <person name="Ashwell R.I.S."/>
            <person name="Aubin K."/>
            <person name="Babbage A.K."/>
            <person name="Bagguley C.L."/>
            <person name="Bailey J."/>
            <person name="Beasley H."/>
            <person name="Bethel G."/>
            <person name="Bird C.P."/>
            <person name="Bray-Allen S."/>
            <person name="Brown J.Y."/>
            <person name="Brown A.J."/>
            <person name="Buckley D."/>
            <person name="Burton J."/>
            <person name="Bye J."/>
            <person name="Carder C."/>
            <person name="Chapman J.C."/>
            <person name="Clark S.Y."/>
            <person name="Clarke G."/>
            <person name="Clee C."/>
            <person name="Cobley V."/>
            <person name="Collier R.E."/>
            <person name="Corby N."/>
            <person name="Coville G.J."/>
            <person name="Davies J."/>
            <person name="Deadman R."/>
            <person name="Dunn M."/>
            <person name="Earthrowl M."/>
            <person name="Ellington A.G."/>
            <person name="Errington H."/>
            <person name="Frankish A."/>
            <person name="Frankland J."/>
            <person name="French L."/>
            <person name="Garner P."/>
            <person name="Garnett J."/>
            <person name="Gay L."/>
            <person name="Ghori M.R.J."/>
            <person name="Gibson R."/>
            <person name="Gilby L.M."/>
            <person name="Gillett W."/>
            <person name="Glithero R.J."/>
            <person name="Grafham D.V."/>
            <person name="Griffiths C."/>
            <person name="Griffiths-Jones S."/>
            <person name="Grocock R."/>
            <person name="Hammond S."/>
            <person name="Harrison E.S.I."/>
            <person name="Hart E."/>
            <person name="Haugen E."/>
            <person name="Heath P.D."/>
            <person name="Holmes S."/>
            <person name="Holt K."/>
            <person name="Howden P.J."/>
            <person name="Hunt A.R."/>
            <person name="Hunt S.E."/>
            <person name="Hunter G."/>
            <person name="Isherwood J."/>
            <person name="James R."/>
            <person name="Johnson C."/>
            <person name="Johnson D."/>
            <person name="Joy A."/>
            <person name="Kay M."/>
            <person name="Kershaw J.K."/>
            <person name="Kibukawa M."/>
            <person name="Kimberley A.M."/>
            <person name="King A."/>
            <person name="Knights A.J."/>
            <person name="Lad H."/>
            <person name="Laird G."/>
            <person name="Lawlor S."/>
            <person name="Leongamornlert D.A."/>
            <person name="Lloyd D.M."/>
            <person name="Loveland J."/>
            <person name="Lovell J."/>
            <person name="Lush M.J."/>
            <person name="Lyne R."/>
            <person name="Martin S."/>
            <person name="Mashreghi-Mohammadi M."/>
            <person name="Matthews L."/>
            <person name="Matthews N.S.W."/>
            <person name="McLaren S."/>
            <person name="Milne S."/>
            <person name="Mistry S."/>
            <person name="Moore M.J.F."/>
            <person name="Nickerson T."/>
            <person name="O'Dell C.N."/>
            <person name="Oliver K."/>
            <person name="Palmeiri A."/>
            <person name="Palmer S.A."/>
            <person name="Parker A."/>
            <person name="Patel D."/>
            <person name="Pearce A.V."/>
            <person name="Peck A.I."/>
            <person name="Pelan S."/>
            <person name="Phelps K."/>
            <person name="Phillimore B.J."/>
            <person name="Plumb R."/>
            <person name="Rajan J."/>
            <person name="Raymond C."/>
            <person name="Rouse G."/>
            <person name="Saenphimmachak C."/>
            <person name="Sehra H.K."/>
            <person name="Sheridan E."/>
            <person name="Shownkeen R."/>
            <person name="Sims S."/>
            <person name="Skuce C.D."/>
            <person name="Smith M."/>
            <person name="Steward C."/>
            <person name="Subramanian S."/>
            <person name="Sycamore N."/>
            <person name="Tracey A."/>
            <person name="Tromans A."/>
            <person name="Van Helmond Z."/>
            <person name="Wall M."/>
            <person name="Wallis J.M."/>
            <person name="White S."/>
            <person name="Whitehead S.L."/>
            <person name="Wilkinson J.E."/>
            <person name="Willey D.L."/>
            <person name="Williams H."/>
            <person name="Wilming L."/>
            <person name="Wray P.W."/>
            <person name="Wu Z."/>
            <person name="Coulson A."/>
            <person name="Vaudin M."/>
            <person name="Sulston J.E."/>
            <person name="Durbin R.M."/>
            <person name="Hubbard T."/>
            <person name="Wooster R."/>
            <person name="Dunham I."/>
            <person name="Carter N.P."/>
            <person name="McVean G."/>
            <person name="Ross M.T."/>
            <person name="Harrow J."/>
            <person name="Olson M.V."/>
            <person name="Beck S."/>
            <person name="Rogers J."/>
            <person name="Bentley D.R."/>
        </authorList>
    </citation>
    <scope>NUCLEOTIDE SEQUENCE [LARGE SCALE GENOMIC DNA]</scope>
</reference>
<protein>
    <recommendedName>
        <fullName>Olfactory receptor 10J3</fullName>
    </recommendedName>
</protein>
<sequence>MPKLNSTFVTEFLFEGFSSFRRQHKLVFFVVFLTLYLLTLSGNVIIMTIIRLDHHLHTPMYFFLCMLSISETCYTVAIIPHMLSGLLNPHQPIATQSCATQLFFYLTFGINNCFLLTVMGYDRYVAICNPLRYSVIMGKRACIQLASGSLGIGLGMAIVQVTSVFGLPFCDAFVISHFFCDVRHLLKLACTDTTVNEIINFVVSVCVLVLPMGLVFISYVLIISTILKIASAEGQKKAFATCASHLTVVIIHYGCASIIYLKPKSQSSLGQDRLISVTYTHHSPTEPCCVQPEEQGGQRCSAQSRGAKNSVSLMKRGCEGFSFAFINMY</sequence>
<name>O10J3_HUMAN</name>
<feature type="chain" id="PRO_0000150708" description="Olfactory receptor 10J3">
    <location>
        <begin position="1"/>
        <end position="329"/>
    </location>
</feature>
<feature type="topological domain" description="Extracellular" evidence="1">
    <location>
        <begin position="1"/>
        <end position="26"/>
    </location>
</feature>
<feature type="transmembrane region" description="Helical; Name=1" evidence="1">
    <location>
        <begin position="27"/>
        <end position="47"/>
    </location>
</feature>
<feature type="topological domain" description="Cytoplasmic" evidence="1">
    <location>
        <begin position="48"/>
        <end position="55"/>
    </location>
</feature>
<feature type="transmembrane region" description="Helical; Name=2" evidence="1">
    <location>
        <begin position="56"/>
        <end position="76"/>
    </location>
</feature>
<feature type="topological domain" description="Extracellular" evidence="1">
    <location>
        <begin position="77"/>
        <end position="100"/>
    </location>
</feature>
<feature type="transmembrane region" description="Helical; Name=3" evidence="1">
    <location>
        <begin position="101"/>
        <end position="121"/>
    </location>
</feature>
<feature type="topological domain" description="Cytoplasmic" evidence="1">
    <location>
        <begin position="122"/>
        <end position="140"/>
    </location>
</feature>
<feature type="transmembrane region" description="Helical; Name=4" evidence="1">
    <location>
        <begin position="141"/>
        <end position="161"/>
    </location>
</feature>
<feature type="topological domain" description="Extracellular" evidence="1">
    <location>
        <begin position="162"/>
        <end position="198"/>
    </location>
</feature>
<feature type="transmembrane region" description="Helical; Name=5" evidence="1">
    <location>
        <begin position="199"/>
        <end position="218"/>
    </location>
</feature>
<feature type="topological domain" description="Cytoplasmic" evidence="1">
    <location>
        <begin position="219"/>
        <end position="238"/>
    </location>
</feature>
<feature type="transmembrane region" description="Helical; Name=6" evidence="1">
    <location>
        <begin position="239"/>
        <end position="259"/>
    </location>
</feature>
<feature type="topological domain" description="Extracellular" evidence="1">
    <location>
        <begin position="260"/>
        <end position="272"/>
    </location>
</feature>
<feature type="transmembrane region" description="Helical; Name=7" evidence="1">
    <location>
        <begin position="273"/>
        <end position="293"/>
    </location>
</feature>
<feature type="topological domain" description="Cytoplasmic" evidence="1">
    <location>
        <begin position="294"/>
        <end position="329"/>
    </location>
</feature>
<feature type="glycosylation site" description="N-linked (GlcNAc...) asparagine" evidence="1">
    <location>
        <position position="5"/>
    </location>
</feature>
<feature type="disulfide bond" evidence="2">
    <location>
        <begin position="98"/>
        <end position="190"/>
    </location>
</feature>
<feature type="sequence variant" id="VAR_053282" description="In dbSNP:rs11265165.">
    <original>Q</original>
    <variation>R</variation>
    <location>
        <position position="235"/>
    </location>
</feature>
<proteinExistence type="inferred from homology"/>
<accession>Q5JRS4</accession>
<organism>
    <name type="scientific">Homo sapiens</name>
    <name type="common">Human</name>
    <dbReference type="NCBI Taxonomy" id="9606"/>
    <lineage>
        <taxon>Eukaryota</taxon>
        <taxon>Metazoa</taxon>
        <taxon>Chordata</taxon>
        <taxon>Craniata</taxon>
        <taxon>Vertebrata</taxon>
        <taxon>Euteleostomi</taxon>
        <taxon>Mammalia</taxon>
        <taxon>Eutheria</taxon>
        <taxon>Euarchontoglires</taxon>
        <taxon>Primates</taxon>
        <taxon>Haplorrhini</taxon>
        <taxon>Catarrhini</taxon>
        <taxon>Hominidae</taxon>
        <taxon>Homo</taxon>
    </lineage>
</organism>
<comment type="function">
    <text evidence="3">Odorant receptor.</text>
</comment>
<comment type="subcellular location">
    <subcellularLocation>
        <location>Cell membrane</location>
        <topology>Multi-pass membrane protein</topology>
    </subcellularLocation>
</comment>
<comment type="similarity">
    <text evidence="2">Belongs to the G-protein coupled receptor 1 family.</text>
</comment>
<comment type="online information" name="Human Olfactory Receptor Data Exploratorium (HORDE)">
    <link uri="http://genome.weizmann.ac.il/horde/card/index/symbol:OR10J3"/>
</comment>
<evidence type="ECO:0000255" key="1"/>
<evidence type="ECO:0000255" key="2">
    <source>
        <dbReference type="PROSITE-ProRule" id="PRU00521"/>
    </source>
</evidence>
<evidence type="ECO:0000305" key="3"/>
<gene>
    <name type="primary">OR10J3</name>
    <name type="synonym">OR10J3P</name>
</gene>
<dbReference type="EMBL" id="AL513323">
    <property type="status" value="NOT_ANNOTATED_CDS"/>
    <property type="molecule type" value="Genomic_DNA"/>
</dbReference>
<dbReference type="RefSeq" id="NP_001004467.1">
    <property type="nucleotide sequence ID" value="NM_001004467.1"/>
</dbReference>
<dbReference type="SMR" id="Q5JRS4"/>
<dbReference type="GlyCosmos" id="Q5JRS4">
    <property type="glycosylation" value="1 site, No reported glycans"/>
</dbReference>
<dbReference type="GlyGen" id="Q5JRS4">
    <property type="glycosylation" value="1 site"/>
</dbReference>
<dbReference type="iPTMnet" id="Q5JRS4"/>
<dbReference type="PhosphoSitePlus" id="Q5JRS4"/>
<dbReference type="BioMuta" id="OR10J3"/>
<dbReference type="DMDM" id="74762193"/>
<dbReference type="PaxDb" id="9606-ENSP00000331789"/>
<dbReference type="Antibodypedia" id="49616">
    <property type="antibodies" value="127 antibodies from 23 providers"/>
</dbReference>
<dbReference type="DNASU" id="441911"/>
<dbReference type="Ensembl" id="ENST00000709165.1">
    <property type="protein sequence ID" value="ENSP00000517530.1"/>
    <property type="gene ID" value="ENSG00000291901.1"/>
</dbReference>
<dbReference type="UCSC" id="uc010piu.2">
    <property type="organism name" value="human"/>
</dbReference>
<dbReference type="AGR" id="HGNC:14992"/>
<dbReference type="DisGeNET" id="441911"/>
<dbReference type="GeneCards" id="OR10J3"/>
<dbReference type="HGNC" id="HGNC:14992">
    <property type="gene designation" value="OR10J3"/>
</dbReference>
<dbReference type="neXtProt" id="NX_Q5JRS4"/>
<dbReference type="PharmGKB" id="PA31984"/>
<dbReference type="VEuPathDB" id="HostDB:ENSG00000196266"/>
<dbReference type="eggNOG" id="ENOG502T9MC">
    <property type="taxonomic scope" value="Eukaryota"/>
</dbReference>
<dbReference type="HOGENOM" id="CLU_012526_1_0_1"/>
<dbReference type="InParanoid" id="Q5JRS4"/>
<dbReference type="OMA" id="FFEFINM"/>
<dbReference type="OrthoDB" id="9975554at2759"/>
<dbReference type="PAN-GO" id="Q5JRS4">
    <property type="GO annotations" value="4 GO annotations based on evolutionary models"/>
</dbReference>
<dbReference type="PhylomeDB" id="Q5JRS4"/>
<dbReference type="TreeFam" id="TF337624"/>
<dbReference type="PathwayCommons" id="Q5JRS4"/>
<dbReference type="Reactome" id="R-HSA-9752946">
    <property type="pathway name" value="Expression and translocation of olfactory receptors"/>
</dbReference>
<dbReference type="SignaLink" id="Q5JRS4"/>
<dbReference type="BioGRID-ORCS" id="441911">
    <property type="hits" value="15 hits in 749 CRISPR screens"/>
</dbReference>
<dbReference type="ChiTaRS" id="OR10J3">
    <property type="organism name" value="human"/>
</dbReference>
<dbReference type="GeneWiki" id="OR10J3"/>
<dbReference type="GenomeRNAi" id="441911"/>
<dbReference type="Pharos" id="Q5JRS4">
    <property type="development level" value="Tdark"/>
</dbReference>
<dbReference type="PRO" id="PR:Q5JRS4"/>
<dbReference type="Proteomes" id="UP000005640">
    <property type="component" value="Unplaced"/>
</dbReference>
<dbReference type="RNAct" id="Q5JRS4">
    <property type="molecule type" value="protein"/>
</dbReference>
<dbReference type="GO" id="GO:0016020">
    <property type="term" value="C:membrane"/>
    <property type="evidence" value="ECO:0000318"/>
    <property type="project" value="GO_Central"/>
</dbReference>
<dbReference type="GO" id="GO:0005886">
    <property type="term" value="C:plasma membrane"/>
    <property type="evidence" value="ECO:0007669"/>
    <property type="project" value="UniProtKB-SubCell"/>
</dbReference>
<dbReference type="GO" id="GO:0004930">
    <property type="term" value="F:G protein-coupled receptor activity"/>
    <property type="evidence" value="ECO:0007669"/>
    <property type="project" value="UniProtKB-KW"/>
</dbReference>
<dbReference type="GO" id="GO:0005549">
    <property type="term" value="F:odorant binding"/>
    <property type="evidence" value="ECO:0000318"/>
    <property type="project" value="GO_Central"/>
</dbReference>
<dbReference type="GO" id="GO:0004984">
    <property type="term" value="F:olfactory receptor activity"/>
    <property type="evidence" value="ECO:0000318"/>
    <property type="project" value="GO_Central"/>
</dbReference>
<dbReference type="GO" id="GO:0050911">
    <property type="term" value="P:detection of chemical stimulus involved in sensory perception of smell"/>
    <property type="evidence" value="ECO:0000318"/>
    <property type="project" value="GO_Central"/>
</dbReference>
<dbReference type="CDD" id="cd15225">
    <property type="entry name" value="7tmA_OR10A-like"/>
    <property type="match status" value="1"/>
</dbReference>
<dbReference type="FunFam" id="1.20.1070.10:FF:000385">
    <property type="entry name" value="Olfactory receptor"/>
    <property type="match status" value="1"/>
</dbReference>
<dbReference type="Gene3D" id="1.20.1070.10">
    <property type="entry name" value="Rhodopsin 7-helix transmembrane proteins"/>
    <property type="match status" value="1"/>
</dbReference>
<dbReference type="InterPro" id="IPR000276">
    <property type="entry name" value="GPCR_Rhodpsn"/>
</dbReference>
<dbReference type="InterPro" id="IPR017452">
    <property type="entry name" value="GPCR_Rhodpsn_7TM"/>
</dbReference>
<dbReference type="InterPro" id="IPR000725">
    <property type="entry name" value="Olfact_rcpt"/>
</dbReference>
<dbReference type="PANTHER" id="PTHR26453">
    <property type="entry name" value="OLFACTORY RECEPTOR"/>
    <property type="match status" value="1"/>
</dbReference>
<dbReference type="Pfam" id="PF13853">
    <property type="entry name" value="7tm_4"/>
    <property type="match status" value="1"/>
</dbReference>
<dbReference type="PRINTS" id="PR00237">
    <property type="entry name" value="GPCRRHODOPSN"/>
</dbReference>
<dbReference type="PRINTS" id="PR00245">
    <property type="entry name" value="OLFACTORYR"/>
</dbReference>
<dbReference type="SUPFAM" id="SSF81321">
    <property type="entry name" value="Family A G protein-coupled receptor-like"/>
    <property type="match status" value="1"/>
</dbReference>
<dbReference type="PROSITE" id="PS50262">
    <property type="entry name" value="G_PROTEIN_RECEP_F1_2"/>
    <property type="match status" value="1"/>
</dbReference>
<keyword id="KW-1003">Cell membrane</keyword>
<keyword id="KW-1015">Disulfide bond</keyword>
<keyword id="KW-0297">G-protein coupled receptor</keyword>
<keyword id="KW-0325">Glycoprotein</keyword>
<keyword id="KW-0472">Membrane</keyword>
<keyword id="KW-0552">Olfaction</keyword>
<keyword id="KW-0675">Receptor</keyword>
<keyword id="KW-1185">Reference proteome</keyword>
<keyword id="KW-0716">Sensory transduction</keyword>
<keyword id="KW-0807">Transducer</keyword>
<keyword id="KW-0812">Transmembrane</keyword>
<keyword id="KW-1133">Transmembrane helix</keyword>